<protein>
    <recommendedName>
        <fullName evidence="1">Oxaloacetate decarboxylase</fullName>
        <ecNumber evidence="1">4.1.1.112</ecNumber>
    </recommendedName>
</protein>
<dbReference type="EC" id="4.1.1.112" evidence="1"/>
<dbReference type="EMBL" id="AM181176">
    <property type="protein sequence ID" value="CAY49334.1"/>
    <property type="molecule type" value="Genomic_DNA"/>
</dbReference>
<dbReference type="RefSeq" id="WP_012724281.1">
    <property type="nucleotide sequence ID" value="NC_012660.1"/>
</dbReference>
<dbReference type="SMR" id="C3KBB4"/>
<dbReference type="STRING" id="294.SRM1_03318"/>
<dbReference type="PATRIC" id="fig|216595.4.peg.3276"/>
<dbReference type="eggNOG" id="COG2513">
    <property type="taxonomic scope" value="Bacteria"/>
</dbReference>
<dbReference type="HOGENOM" id="CLU_027389_3_2_6"/>
<dbReference type="OrthoDB" id="9771433at2"/>
<dbReference type="GO" id="GO:0000287">
    <property type="term" value="F:magnesium ion binding"/>
    <property type="evidence" value="ECO:0007669"/>
    <property type="project" value="UniProtKB-UniRule"/>
</dbReference>
<dbReference type="GO" id="GO:0046421">
    <property type="term" value="F:methylisocitrate lyase activity"/>
    <property type="evidence" value="ECO:0007669"/>
    <property type="project" value="TreeGrafter"/>
</dbReference>
<dbReference type="GO" id="GO:0008948">
    <property type="term" value="F:oxaloacetate decarboxylase activity"/>
    <property type="evidence" value="ECO:0007669"/>
    <property type="project" value="UniProtKB-UniRule"/>
</dbReference>
<dbReference type="GO" id="GO:0006107">
    <property type="term" value="P:oxaloacetate metabolic process"/>
    <property type="evidence" value="ECO:0007669"/>
    <property type="project" value="UniProtKB-UniRule"/>
</dbReference>
<dbReference type="GO" id="GO:0019629">
    <property type="term" value="P:propionate catabolic process, 2-methylcitrate cycle"/>
    <property type="evidence" value="ECO:0007669"/>
    <property type="project" value="TreeGrafter"/>
</dbReference>
<dbReference type="GO" id="GO:0042866">
    <property type="term" value="P:pyruvate biosynthetic process"/>
    <property type="evidence" value="ECO:0007669"/>
    <property type="project" value="UniProtKB-UniRule"/>
</dbReference>
<dbReference type="CDD" id="cd00377">
    <property type="entry name" value="ICL_PEPM"/>
    <property type="match status" value="1"/>
</dbReference>
<dbReference type="Gene3D" id="3.20.20.60">
    <property type="entry name" value="Phosphoenolpyruvate-binding domains"/>
    <property type="match status" value="1"/>
</dbReference>
<dbReference type="HAMAP" id="MF_01299">
    <property type="entry name" value="OadC"/>
    <property type="match status" value="1"/>
</dbReference>
<dbReference type="InterPro" id="IPR039556">
    <property type="entry name" value="ICL/PEPM"/>
</dbReference>
<dbReference type="InterPro" id="IPR023687">
    <property type="entry name" value="Oxaloacetate_deCOase_bac"/>
</dbReference>
<dbReference type="InterPro" id="IPR015813">
    <property type="entry name" value="Pyrv/PenolPyrv_kinase-like_dom"/>
</dbReference>
<dbReference type="InterPro" id="IPR040442">
    <property type="entry name" value="Pyrv_kinase-like_dom_sf"/>
</dbReference>
<dbReference type="PANTHER" id="PTHR42905:SF3">
    <property type="entry name" value="OXALOACETATE DECARBOXYLASE"/>
    <property type="match status" value="1"/>
</dbReference>
<dbReference type="PANTHER" id="PTHR42905">
    <property type="entry name" value="PHOSPHOENOLPYRUVATE CARBOXYLASE"/>
    <property type="match status" value="1"/>
</dbReference>
<dbReference type="Pfam" id="PF13714">
    <property type="entry name" value="PEP_mutase"/>
    <property type="match status" value="1"/>
</dbReference>
<dbReference type="SUPFAM" id="SSF51621">
    <property type="entry name" value="Phosphoenolpyruvate/pyruvate domain"/>
    <property type="match status" value="1"/>
</dbReference>
<organism>
    <name type="scientific">Pseudomonas fluorescens (strain SBW25)</name>
    <dbReference type="NCBI Taxonomy" id="216595"/>
    <lineage>
        <taxon>Bacteria</taxon>
        <taxon>Pseudomonadati</taxon>
        <taxon>Pseudomonadota</taxon>
        <taxon>Gammaproteobacteria</taxon>
        <taxon>Pseudomonadales</taxon>
        <taxon>Pseudomonadaceae</taxon>
        <taxon>Pseudomonas</taxon>
    </lineage>
</organism>
<gene>
    <name type="ordered locus">PFLU_3105</name>
</gene>
<feature type="chain" id="PRO_1000214238" description="Oxaloacetate decarboxylase">
    <location>
        <begin position="1"/>
        <end position="289"/>
    </location>
</feature>
<feature type="binding site" evidence="1">
    <location>
        <position position="50"/>
    </location>
    <ligand>
        <name>substrate</name>
    </ligand>
</feature>
<feature type="binding site" evidence="1">
    <location>
        <position position="88"/>
    </location>
    <ligand>
        <name>Mg(2+)</name>
        <dbReference type="ChEBI" id="CHEBI:18420"/>
    </ligand>
</feature>
<feature type="binding site" evidence="1">
    <location>
        <position position="159"/>
    </location>
    <ligand>
        <name>substrate</name>
    </ligand>
</feature>
<feature type="binding site" evidence="1">
    <location>
        <position position="235"/>
    </location>
    <ligand>
        <name>substrate</name>
    </ligand>
</feature>
<reference key="1">
    <citation type="journal article" date="2009" name="Genome Biol.">
        <title>Genomic and genetic analyses of diversity and plant interactions of Pseudomonas fluorescens.</title>
        <authorList>
            <person name="Silby M.W."/>
            <person name="Cerdeno-Tarraga A.M."/>
            <person name="Vernikos G.S."/>
            <person name="Giddens S.R."/>
            <person name="Jackson R.W."/>
            <person name="Preston G.M."/>
            <person name="Zhang X.-X."/>
            <person name="Moon C.D."/>
            <person name="Gehrig S.M."/>
            <person name="Godfrey S.A.C."/>
            <person name="Knight C.G."/>
            <person name="Malone J.G."/>
            <person name="Robinson Z."/>
            <person name="Spiers A.J."/>
            <person name="Harris S."/>
            <person name="Challis G.L."/>
            <person name="Yaxley A.M."/>
            <person name="Harris D."/>
            <person name="Seeger K."/>
            <person name="Murphy L."/>
            <person name="Rutter S."/>
            <person name="Squares R."/>
            <person name="Quail M.A."/>
            <person name="Saunders E."/>
            <person name="Mavromatis K."/>
            <person name="Brettin T.S."/>
            <person name="Bentley S.D."/>
            <person name="Hothersall J."/>
            <person name="Stephens E."/>
            <person name="Thomas C.M."/>
            <person name="Parkhill J."/>
            <person name="Levy S.B."/>
            <person name="Rainey P.B."/>
            <person name="Thomson N.R."/>
        </authorList>
    </citation>
    <scope>NUCLEOTIDE SEQUENCE [LARGE SCALE GENOMIC DNA]</scope>
    <source>
        <strain>SBW25</strain>
    </source>
</reference>
<name>OADC_PSEFS</name>
<evidence type="ECO:0000255" key="1">
    <source>
        <dbReference type="HAMAP-Rule" id="MF_01299"/>
    </source>
</evidence>
<sequence>MPKISHSALRRTFRELLATPTCVETASVFDPMSARIAADLGFEVGILGGSVASLQVLAAPDFALITLSEFVEQATRIGRVAQLPFIADADHGYGNALNVMRTVEELERAGVAALTIEDTLLPAQFGRKSTDLISIEEGIGKVRAALEARVDPELSIIARTNAGVLPTEAVIERTLAYQKAGADGICMVGVADFEHLEQIAENLTVPLMLVTYGNPKLNDAKRLASLGVRVVVAGHGAYFAAIKATYDSLRAQRQLTHSTDNLSATELTHTYTLPENYVAWAEEFMDVKE</sequence>
<accession>C3KBB4</accession>
<comment type="function">
    <text evidence="1">Catalyzes the decarboxylation of oxaloacetate into pyruvate. Seems to play a role in maintaining cellular concentrations of bicarbonate and pyruvate.</text>
</comment>
<comment type="catalytic activity">
    <reaction evidence="1">
        <text>oxaloacetate + H(+) = pyruvate + CO2</text>
        <dbReference type="Rhea" id="RHEA:15641"/>
        <dbReference type="ChEBI" id="CHEBI:15361"/>
        <dbReference type="ChEBI" id="CHEBI:15378"/>
        <dbReference type="ChEBI" id="CHEBI:16452"/>
        <dbReference type="ChEBI" id="CHEBI:16526"/>
        <dbReference type="EC" id="4.1.1.112"/>
    </reaction>
</comment>
<comment type="cofactor">
    <cofactor evidence="1">
        <name>Mg(2+)</name>
        <dbReference type="ChEBI" id="CHEBI:18420"/>
    </cofactor>
    <text evidence="1">Binds 1 Mg(2+) ion per subunit.</text>
</comment>
<comment type="subunit">
    <text evidence="1">Homotetramer; dimer of dimers.</text>
</comment>
<comment type="similarity">
    <text evidence="1">Belongs to the isocitrate lyase family. Oxaloacetate decarboxylase subfamily.</text>
</comment>
<keyword id="KW-0210">Decarboxylase</keyword>
<keyword id="KW-0456">Lyase</keyword>
<keyword id="KW-0460">Magnesium</keyword>
<keyword id="KW-0479">Metal-binding</keyword>
<proteinExistence type="inferred from homology"/>